<feature type="chain" id="PRO_0000057045" description="ADP-ribose pyrophosphatase">
    <location>
        <begin position="1"/>
        <end position="217"/>
    </location>
</feature>
<feature type="domain" description="Nudix hydrolase" evidence="2">
    <location>
        <begin position="58"/>
        <end position="204"/>
    </location>
</feature>
<feature type="short sequence motif" description="Nudix box">
    <location>
        <begin position="103"/>
        <end position="124"/>
    </location>
</feature>
<feature type="active site" description="Proton acceptor" evidence="1">
    <location>
        <position position="168"/>
    </location>
</feature>
<feature type="binding site" description="in other chain" evidence="1">
    <location>
        <begin position="31"/>
        <end position="32"/>
    </location>
    <ligand>
        <name>substrate</name>
        <note>ligand shared between dimeric partners</note>
    </ligand>
</feature>
<feature type="binding site" evidence="1">
    <location>
        <begin position="54"/>
        <end position="55"/>
    </location>
    <ligand>
        <name>substrate</name>
        <note>ligand shared between dimeric partners</note>
    </ligand>
</feature>
<feature type="binding site" description="in other chain" evidence="1">
    <location>
        <position position="82"/>
    </location>
    <ligand>
        <name>substrate</name>
        <note>ligand shared between dimeric partners</note>
    </ligand>
</feature>
<feature type="binding site" evidence="1">
    <location>
        <position position="102"/>
    </location>
    <ligand>
        <name>Mg(2+)</name>
        <dbReference type="ChEBI" id="CHEBI:18420"/>
        <label>1</label>
    </ligand>
</feature>
<feature type="binding site" description="in other chain" evidence="1">
    <location>
        <position position="104"/>
    </location>
    <ligand>
        <name>substrate</name>
        <note>ligand shared between dimeric partners</note>
    </ligand>
</feature>
<feature type="binding site" evidence="1">
    <location>
        <position position="118"/>
    </location>
    <ligand>
        <name>Mg(2+)</name>
        <dbReference type="ChEBI" id="CHEBI:18420"/>
        <label>2</label>
    </ligand>
</feature>
<feature type="binding site" evidence="1">
    <location>
        <position position="118"/>
    </location>
    <ligand>
        <name>Mg(2+)</name>
        <dbReference type="ChEBI" id="CHEBI:18420"/>
        <label>3</label>
    </ligand>
</feature>
<feature type="binding site" evidence="1">
    <location>
        <position position="122"/>
    </location>
    <ligand>
        <name>Mg(2+)</name>
        <dbReference type="ChEBI" id="CHEBI:18420"/>
        <label>1</label>
    </ligand>
</feature>
<feature type="binding site" evidence="1">
    <location>
        <position position="122"/>
    </location>
    <ligand>
        <name>Mg(2+)</name>
        <dbReference type="ChEBI" id="CHEBI:18420"/>
        <label>3</label>
    </ligand>
</feature>
<feature type="binding site" evidence="1">
    <location>
        <begin position="139"/>
        <end position="141"/>
    </location>
    <ligand>
        <name>substrate</name>
        <note>ligand shared between dimeric partners</note>
    </ligand>
</feature>
<feature type="binding site" description="in other chain" evidence="1">
    <location>
        <position position="145"/>
    </location>
    <ligand>
        <name>substrate</name>
        <note>ligand shared between dimeric partners</note>
    </ligand>
</feature>
<feature type="binding site" evidence="1">
    <location>
        <position position="170"/>
    </location>
    <ligand>
        <name>Mg(2+)</name>
        <dbReference type="ChEBI" id="CHEBI:18420"/>
        <label>3</label>
    </ligand>
</feature>
<protein>
    <recommendedName>
        <fullName>ADP-ribose pyrophosphatase</fullName>
        <ecNumber>3.6.1.13</ecNumber>
    </recommendedName>
    <alternativeName>
        <fullName>ADP-ribose diphosphatase</fullName>
    </alternativeName>
    <alternativeName>
        <fullName>ADP-ribose phosphohydrolase</fullName>
        <shortName>ASPPase</shortName>
    </alternativeName>
    <alternativeName>
        <fullName>Adenosine diphosphoribose pyrophosphatase</fullName>
        <shortName>ADPR-PPase</shortName>
    </alternativeName>
</protein>
<gene>
    <name type="primary">nudF</name>
    <name type="ordered locus">HI_0398</name>
</gene>
<reference key="1">
    <citation type="journal article" date="1995" name="Science">
        <title>Whole-genome random sequencing and assembly of Haemophilus influenzae Rd.</title>
        <authorList>
            <person name="Fleischmann R.D."/>
            <person name="Adams M.D."/>
            <person name="White O."/>
            <person name="Clayton R.A."/>
            <person name="Kirkness E.F."/>
            <person name="Kerlavage A.R."/>
            <person name="Bult C.J."/>
            <person name="Tomb J.-F."/>
            <person name="Dougherty B.A."/>
            <person name="Merrick J.M."/>
            <person name="McKenney K."/>
            <person name="Sutton G.G."/>
            <person name="FitzHugh W."/>
            <person name="Fields C.A."/>
            <person name="Gocayne J.D."/>
            <person name="Scott J.D."/>
            <person name="Shirley R."/>
            <person name="Liu L.-I."/>
            <person name="Glodek A."/>
            <person name="Kelley J.M."/>
            <person name="Weidman J.F."/>
            <person name="Phillips C.A."/>
            <person name="Spriggs T."/>
            <person name="Hedblom E."/>
            <person name="Cotton M.D."/>
            <person name="Utterback T.R."/>
            <person name="Hanna M.C."/>
            <person name="Nguyen D.T."/>
            <person name="Saudek D.M."/>
            <person name="Brandon R.C."/>
            <person name="Fine L.D."/>
            <person name="Fritchman J.L."/>
            <person name="Fuhrmann J.L."/>
            <person name="Geoghagen N.S.M."/>
            <person name="Gnehm C.L."/>
            <person name="McDonald L.A."/>
            <person name="Small K.V."/>
            <person name="Fraser C.M."/>
            <person name="Smith H.O."/>
            <person name="Venter J.C."/>
        </authorList>
    </citation>
    <scope>NUCLEOTIDE SEQUENCE [LARGE SCALE GENOMIC DNA]</scope>
    <source>
        <strain>ATCC 51907 / DSM 11121 / KW20 / Rd</strain>
    </source>
</reference>
<reference key="2">
    <citation type="journal article" date="1999" name="J. Biol. Chem.">
        <title>Studies on the ADP-ribose pyrophosphatase subfamily of the nudix hydrolases and tentative identification of trgB, a gene associated with tellurite resistance.</title>
        <authorList>
            <person name="Dunn C.A."/>
            <person name="O'Handley S.F."/>
            <person name="Frick D.N."/>
            <person name="Bessman M.J."/>
        </authorList>
    </citation>
    <scope>CHARACTERIZATION</scope>
</reference>
<evidence type="ECO:0000250" key="1"/>
<evidence type="ECO:0000255" key="2">
    <source>
        <dbReference type="PROSITE-ProRule" id="PRU00794"/>
    </source>
</evidence>
<evidence type="ECO:0000305" key="3"/>
<organism>
    <name type="scientific">Haemophilus influenzae (strain ATCC 51907 / DSM 11121 / KW20 / Rd)</name>
    <dbReference type="NCBI Taxonomy" id="71421"/>
    <lineage>
        <taxon>Bacteria</taxon>
        <taxon>Pseudomonadati</taxon>
        <taxon>Pseudomonadota</taxon>
        <taxon>Gammaproteobacteria</taxon>
        <taxon>Pasteurellales</taxon>
        <taxon>Pasteurellaceae</taxon>
        <taxon>Haemophilus</taxon>
    </lineage>
</organism>
<name>ADPP_HAEIN</name>
<proteinExistence type="evidence at protein level"/>
<dbReference type="EC" id="3.6.1.13"/>
<dbReference type="EMBL" id="L42023">
    <property type="protein sequence ID" value="AAC22057.1"/>
    <property type="molecule type" value="Genomic_DNA"/>
</dbReference>
<dbReference type="PIR" id="B64151">
    <property type="entry name" value="B64151"/>
</dbReference>
<dbReference type="RefSeq" id="NP_438560.2">
    <property type="nucleotide sequence ID" value="NC_000907.1"/>
</dbReference>
<dbReference type="SMR" id="P44684"/>
<dbReference type="STRING" id="71421.HI_0398"/>
<dbReference type="EnsemblBacteria" id="AAC22057">
    <property type="protein sequence ID" value="AAC22057"/>
    <property type="gene ID" value="HI_0398"/>
</dbReference>
<dbReference type="KEGG" id="hin:HI_0398"/>
<dbReference type="PATRIC" id="fig|71421.8.peg.417"/>
<dbReference type="eggNOG" id="COG0494">
    <property type="taxonomic scope" value="Bacteria"/>
</dbReference>
<dbReference type="HOGENOM" id="CLU_062658_6_1_6"/>
<dbReference type="OrthoDB" id="5292471at2"/>
<dbReference type="PhylomeDB" id="P44684"/>
<dbReference type="BRENDA" id="3.6.1.13">
    <property type="organism ID" value="2529"/>
</dbReference>
<dbReference type="Proteomes" id="UP000000579">
    <property type="component" value="Chromosome"/>
</dbReference>
<dbReference type="GO" id="GO:0005829">
    <property type="term" value="C:cytosol"/>
    <property type="evidence" value="ECO:0000318"/>
    <property type="project" value="GO_Central"/>
</dbReference>
<dbReference type="GO" id="GO:0047631">
    <property type="term" value="F:ADP-ribose diphosphatase activity"/>
    <property type="evidence" value="ECO:0007669"/>
    <property type="project" value="UniProtKB-EC"/>
</dbReference>
<dbReference type="GO" id="GO:0019144">
    <property type="term" value="F:ADP-sugar diphosphatase activity"/>
    <property type="evidence" value="ECO:0000318"/>
    <property type="project" value="GO_Central"/>
</dbReference>
<dbReference type="GO" id="GO:0046872">
    <property type="term" value="F:metal ion binding"/>
    <property type="evidence" value="ECO:0007669"/>
    <property type="project" value="UniProtKB-KW"/>
</dbReference>
<dbReference type="GO" id="GO:0006753">
    <property type="term" value="P:nucleoside phosphate metabolic process"/>
    <property type="evidence" value="ECO:0000318"/>
    <property type="project" value="GO_Central"/>
</dbReference>
<dbReference type="GO" id="GO:0019693">
    <property type="term" value="P:ribose phosphate metabolic process"/>
    <property type="evidence" value="ECO:0000318"/>
    <property type="project" value="GO_Central"/>
</dbReference>
<dbReference type="CDD" id="cd24155">
    <property type="entry name" value="NUDIX_ADPRase"/>
    <property type="match status" value="1"/>
</dbReference>
<dbReference type="FunFam" id="3.90.79.10:FF:000011">
    <property type="entry name" value="ADP-ribose pyrophosphatase"/>
    <property type="match status" value="1"/>
</dbReference>
<dbReference type="Gene3D" id="3.90.79.10">
    <property type="entry name" value="Nucleoside Triphosphate Pyrophosphohydrolase"/>
    <property type="match status" value="1"/>
</dbReference>
<dbReference type="InterPro" id="IPR004385">
    <property type="entry name" value="NDP_pyrophosphatase"/>
</dbReference>
<dbReference type="InterPro" id="IPR015797">
    <property type="entry name" value="NUDIX_hydrolase-like_dom_sf"/>
</dbReference>
<dbReference type="InterPro" id="IPR020084">
    <property type="entry name" value="NUDIX_hydrolase_CS"/>
</dbReference>
<dbReference type="InterPro" id="IPR000086">
    <property type="entry name" value="NUDIX_hydrolase_dom"/>
</dbReference>
<dbReference type="NCBIfam" id="TIGR00052">
    <property type="entry name" value="nudix-type nucleoside diphosphatase, YffH/AdpP family"/>
    <property type="match status" value="1"/>
</dbReference>
<dbReference type="NCBIfam" id="NF008003">
    <property type="entry name" value="PRK10729.1"/>
    <property type="match status" value="1"/>
</dbReference>
<dbReference type="PANTHER" id="PTHR11839:SF5">
    <property type="entry name" value="ADP-RIBOSE PYROPHOSPHATASE"/>
    <property type="match status" value="1"/>
</dbReference>
<dbReference type="PANTHER" id="PTHR11839">
    <property type="entry name" value="UDP/ADP-SUGAR PYROPHOSPHATASE"/>
    <property type="match status" value="1"/>
</dbReference>
<dbReference type="Pfam" id="PF00293">
    <property type="entry name" value="NUDIX"/>
    <property type="match status" value="1"/>
</dbReference>
<dbReference type="SUPFAM" id="SSF55811">
    <property type="entry name" value="Nudix"/>
    <property type="match status" value="1"/>
</dbReference>
<dbReference type="PROSITE" id="PS51462">
    <property type="entry name" value="NUDIX"/>
    <property type="match status" value="1"/>
</dbReference>
<dbReference type="PROSITE" id="PS00893">
    <property type="entry name" value="NUDIX_BOX"/>
    <property type="match status" value="1"/>
</dbReference>
<sequence length="217" mass="24580">MQFWRKQMSEIQHFSQQDIEILGEQTLYEGFFTLKRIQFKHKLFAGGQSGVVTRELLIKGAASAVIAYDPKEDSVILVEQVRIGAAYHPESHRSPWLLELIAGMVEKGEKPEDVALRESEEEAGIQVKNLTHCLSVWDSPGGIVERIHLFAGEVDSAQAKGIHGLAEENEDIKVHVVKREQAYQWMCEGKIDNGIAVIGLQWLQLNYAQLQQSWKRS</sequence>
<comment type="function">
    <text evidence="1">Acts on ADP-mannose and ADP-glucose as well as ADP-ribose. Prevents glycogen biosynthesis. The reaction catalyzed by this enzyme is a limiting step of the gluconeogenic process (By similarity).</text>
</comment>
<comment type="catalytic activity">
    <reaction>
        <text>ADP-D-ribose + H2O = D-ribose 5-phosphate + AMP + 2 H(+)</text>
        <dbReference type="Rhea" id="RHEA:10412"/>
        <dbReference type="ChEBI" id="CHEBI:15377"/>
        <dbReference type="ChEBI" id="CHEBI:15378"/>
        <dbReference type="ChEBI" id="CHEBI:57967"/>
        <dbReference type="ChEBI" id="CHEBI:78346"/>
        <dbReference type="ChEBI" id="CHEBI:456215"/>
        <dbReference type="EC" id="3.6.1.13"/>
    </reaction>
</comment>
<comment type="cofactor">
    <cofactor evidence="1">
        <name>Mg(2+)</name>
        <dbReference type="ChEBI" id="CHEBI:18420"/>
    </cofactor>
    <text evidence="1">Binds 3 Mg(2+) ions per subunit.</text>
</comment>
<comment type="similarity">
    <text evidence="3">Belongs to the Nudix hydrolase family. NudF subfamily.</text>
</comment>
<keyword id="KW-0378">Hydrolase</keyword>
<keyword id="KW-0460">Magnesium</keyword>
<keyword id="KW-0479">Metal-binding</keyword>
<keyword id="KW-1185">Reference proteome</keyword>
<accession>P44684</accession>